<accession>A2BYL7</accession>
<keyword id="KW-0963">Cytoplasm</keyword>
<keyword id="KW-0690">Ribosome biogenesis</keyword>
<organism>
    <name type="scientific">Prochlorococcus marinus (strain MIT 9515)</name>
    <dbReference type="NCBI Taxonomy" id="167542"/>
    <lineage>
        <taxon>Bacteria</taxon>
        <taxon>Bacillati</taxon>
        <taxon>Cyanobacteriota</taxon>
        <taxon>Cyanophyceae</taxon>
        <taxon>Synechococcales</taxon>
        <taxon>Prochlorococcaceae</taxon>
        <taxon>Prochlorococcus</taxon>
    </lineage>
</organism>
<feature type="chain" id="PRO_1000064745" description="Ribosome maturation factor RimP">
    <location>
        <begin position="1"/>
        <end position="155"/>
    </location>
</feature>
<name>RIMP_PROM5</name>
<sequence>MDKELKNNLEILLEEVAKEFNLKVYSLNLLTNQNPIIIKIIIKKTNEEDITIEDCSRFNNPASAVIENSNLLKCSYVLEISSQGVSDELTSERDFKTFKGFPVNVELNQKNSRIKLLNGLLYEKSKDYLAINIKGKIKKIPFNEVLKISLCTRQD</sequence>
<comment type="function">
    <text evidence="1">Required for maturation of 30S ribosomal subunits.</text>
</comment>
<comment type="subcellular location">
    <subcellularLocation>
        <location evidence="1">Cytoplasm</location>
    </subcellularLocation>
</comment>
<comment type="similarity">
    <text evidence="1">Belongs to the RimP family.</text>
</comment>
<gene>
    <name evidence="1" type="primary">rimP</name>
    <name type="ordered locus">P9515_16711</name>
</gene>
<protein>
    <recommendedName>
        <fullName evidence="1">Ribosome maturation factor RimP</fullName>
    </recommendedName>
</protein>
<proteinExistence type="inferred from homology"/>
<dbReference type="EMBL" id="CP000552">
    <property type="protein sequence ID" value="ABM72878.1"/>
    <property type="molecule type" value="Genomic_DNA"/>
</dbReference>
<dbReference type="RefSeq" id="WP_011820971.1">
    <property type="nucleotide sequence ID" value="NC_008817.1"/>
</dbReference>
<dbReference type="SMR" id="A2BYL7"/>
<dbReference type="STRING" id="167542.P9515_16711"/>
<dbReference type="GeneID" id="60201715"/>
<dbReference type="KEGG" id="pmc:P9515_16711"/>
<dbReference type="eggNOG" id="COG0779">
    <property type="taxonomic scope" value="Bacteria"/>
</dbReference>
<dbReference type="HOGENOM" id="CLU_070525_2_1_3"/>
<dbReference type="OrthoDB" id="9805006at2"/>
<dbReference type="Proteomes" id="UP000001589">
    <property type="component" value="Chromosome"/>
</dbReference>
<dbReference type="GO" id="GO:0005829">
    <property type="term" value="C:cytosol"/>
    <property type="evidence" value="ECO:0007669"/>
    <property type="project" value="TreeGrafter"/>
</dbReference>
<dbReference type="GO" id="GO:0000028">
    <property type="term" value="P:ribosomal small subunit assembly"/>
    <property type="evidence" value="ECO:0007669"/>
    <property type="project" value="TreeGrafter"/>
</dbReference>
<dbReference type="GO" id="GO:0006412">
    <property type="term" value="P:translation"/>
    <property type="evidence" value="ECO:0007669"/>
    <property type="project" value="TreeGrafter"/>
</dbReference>
<dbReference type="Gene3D" id="3.30.300.70">
    <property type="entry name" value="RimP-like superfamily, N-terminal"/>
    <property type="match status" value="1"/>
</dbReference>
<dbReference type="HAMAP" id="MF_01077">
    <property type="entry name" value="RimP"/>
    <property type="match status" value="1"/>
</dbReference>
<dbReference type="InterPro" id="IPR003728">
    <property type="entry name" value="Ribosome_maturation_RimP"/>
</dbReference>
<dbReference type="InterPro" id="IPR036847">
    <property type="entry name" value="RimP_C_sf"/>
</dbReference>
<dbReference type="InterPro" id="IPR028989">
    <property type="entry name" value="RimP_N"/>
</dbReference>
<dbReference type="InterPro" id="IPR035956">
    <property type="entry name" value="RimP_N_sf"/>
</dbReference>
<dbReference type="NCBIfam" id="NF011240">
    <property type="entry name" value="PRK14646.1"/>
    <property type="match status" value="1"/>
</dbReference>
<dbReference type="PANTHER" id="PTHR33867">
    <property type="entry name" value="RIBOSOME MATURATION FACTOR RIMP"/>
    <property type="match status" value="1"/>
</dbReference>
<dbReference type="PANTHER" id="PTHR33867:SF1">
    <property type="entry name" value="RIBOSOME MATURATION FACTOR RIMP"/>
    <property type="match status" value="1"/>
</dbReference>
<dbReference type="Pfam" id="PF02576">
    <property type="entry name" value="RimP_N"/>
    <property type="match status" value="1"/>
</dbReference>
<dbReference type="SUPFAM" id="SSF74942">
    <property type="entry name" value="YhbC-like, C-terminal domain"/>
    <property type="match status" value="1"/>
</dbReference>
<dbReference type="SUPFAM" id="SSF75420">
    <property type="entry name" value="YhbC-like, N-terminal domain"/>
    <property type="match status" value="1"/>
</dbReference>
<reference key="1">
    <citation type="journal article" date="2007" name="PLoS Genet.">
        <title>Patterns and implications of gene gain and loss in the evolution of Prochlorococcus.</title>
        <authorList>
            <person name="Kettler G.C."/>
            <person name="Martiny A.C."/>
            <person name="Huang K."/>
            <person name="Zucker J."/>
            <person name="Coleman M.L."/>
            <person name="Rodrigue S."/>
            <person name="Chen F."/>
            <person name="Lapidus A."/>
            <person name="Ferriera S."/>
            <person name="Johnson J."/>
            <person name="Steglich C."/>
            <person name="Church G.M."/>
            <person name="Richardson P."/>
            <person name="Chisholm S.W."/>
        </authorList>
    </citation>
    <scope>NUCLEOTIDE SEQUENCE [LARGE SCALE GENOMIC DNA]</scope>
    <source>
        <strain>MIT 9515</strain>
    </source>
</reference>
<evidence type="ECO:0000255" key="1">
    <source>
        <dbReference type="HAMAP-Rule" id="MF_01077"/>
    </source>
</evidence>